<proteinExistence type="evidence at transcript level"/>
<gene>
    <name type="primary">GLYR1</name>
    <name type="synonym">NP60</name>
    <name type="ORF">RCJMB04_4p18</name>
</gene>
<dbReference type="EMBL" id="AJ719657">
    <property type="protein sequence ID" value="CAG31316.1"/>
    <property type="molecule type" value="mRNA"/>
</dbReference>
<dbReference type="RefSeq" id="NP_001006572.1">
    <property type="nucleotide sequence ID" value="NM_001006572.2"/>
</dbReference>
<dbReference type="SMR" id="Q5ZLS7"/>
<dbReference type="FunCoup" id="Q5ZLS7">
    <property type="interactions" value="2636"/>
</dbReference>
<dbReference type="STRING" id="9031.ENSGALP00000045893"/>
<dbReference type="PaxDb" id="9031-ENSGALP00000002822"/>
<dbReference type="GeneID" id="426988"/>
<dbReference type="KEGG" id="gga:426988"/>
<dbReference type="CTD" id="84656"/>
<dbReference type="VEuPathDB" id="HostDB:geneid_426988"/>
<dbReference type="eggNOG" id="KOG0409">
    <property type="taxonomic scope" value="Eukaryota"/>
</dbReference>
<dbReference type="eggNOG" id="KOG1904">
    <property type="taxonomic scope" value="Eukaryota"/>
</dbReference>
<dbReference type="InParanoid" id="Q5ZLS7"/>
<dbReference type="OrthoDB" id="21615at2759"/>
<dbReference type="PhylomeDB" id="Q5ZLS7"/>
<dbReference type="PRO" id="PR:Q5ZLS7"/>
<dbReference type="Proteomes" id="UP000000539">
    <property type="component" value="Unassembled WGS sequence"/>
</dbReference>
<dbReference type="GO" id="GO:0000785">
    <property type="term" value="C:chromatin"/>
    <property type="evidence" value="ECO:0000318"/>
    <property type="project" value="GO_Central"/>
</dbReference>
<dbReference type="GO" id="GO:0005634">
    <property type="term" value="C:nucleus"/>
    <property type="evidence" value="ECO:0007669"/>
    <property type="project" value="UniProtKB-SubCell"/>
</dbReference>
<dbReference type="GO" id="GO:0003677">
    <property type="term" value="F:DNA binding"/>
    <property type="evidence" value="ECO:0000318"/>
    <property type="project" value="GO_Central"/>
</dbReference>
<dbReference type="GO" id="GO:0051287">
    <property type="term" value="F:NAD binding"/>
    <property type="evidence" value="ECO:0007669"/>
    <property type="project" value="InterPro"/>
</dbReference>
<dbReference type="GO" id="GO:0050661">
    <property type="term" value="F:NADP binding"/>
    <property type="evidence" value="ECO:0007669"/>
    <property type="project" value="InterPro"/>
</dbReference>
<dbReference type="GO" id="GO:0031491">
    <property type="term" value="F:nucleosome binding"/>
    <property type="evidence" value="ECO:0000318"/>
    <property type="project" value="GO_Central"/>
</dbReference>
<dbReference type="GO" id="GO:0140673">
    <property type="term" value="P:transcription elongation-coupled chromatin remodeling"/>
    <property type="evidence" value="ECO:0000318"/>
    <property type="project" value="GO_Central"/>
</dbReference>
<dbReference type="CDD" id="cd05836">
    <property type="entry name" value="PWWP_GLYR1"/>
    <property type="match status" value="1"/>
</dbReference>
<dbReference type="FunFam" id="3.40.50.720:FF:000058">
    <property type="entry name" value="Putative oxidoreductase GLYR1 homolog"/>
    <property type="match status" value="1"/>
</dbReference>
<dbReference type="FunFam" id="1.10.1040.10:FF:000011">
    <property type="entry name" value="putative oxidoreductase GLYR1 isoform X1"/>
    <property type="match status" value="1"/>
</dbReference>
<dbReference type="FunFam" id="2.30.30.140:FF:000027">
    <property type="entry name" value="putative oxidoreductase GLYR1 isoform X1"/>
    <property type="match status" value="1"/>
</dbReference>
<dbReference type="Gene3D" id="2.30.30.140">
    <property type="match status" value="1"/>
</dbReference>
<dbReference type="Gene3D" id="1.10.1040.10">
    <property type="entry name" value="N-(1-d-carboxylethyl)-l-norvaline Dehydrogenase, domain 2"/>
    <property type="match status" value="1"/>
</dbReference>
<dbReference type="Gene3D" id="3.40.50.720">
    <property type="entry name" value="NAD(P)-binding Rossmann-like Domain"/>
    <property type="match status" value="1"/>
</dbReference>
<dbReference type="InterPro" id="IPR008927">
    <property type="entry name" value="6-PGluconate_DH-like_C_sf"/>
</dbReference>
<dbReference type="InterPro" id="IPR013328">
    <property type="entry name" value="6PGD_dom2"/>
</dbReference>
<dbReference type="InterPro" id="IPR006115">
    <property type="entry name" value="6PGDH_NADP-bd"/>
</dbReference>
<dbReference type="InterPro" id="IPR035501">
    <property type="entry name" value="GLYR1_PWWP"/>
</dbReference>
<dbReference type="InterPro" id="IPR029154">
    <property type="entry name" value="HIBADH-like_NADP-bd"/>
</dbReference>
<dbReference type="InterPro" id="IPR051265">
    <property type="entry name" value="HIBADH-related_NP60_sf"/>
</dbReference>
<dbReference type="InterPro" id="IPR036291">
    <property type="entry name" value="NAD(P)-bd_dom_sf"/>
</dbReference>
<dbReference type="InterPro" id="IPR000313">
    <property type="entry name" value="PWWP_dom"/>
</dbReference>
<dbReference type="PANTHER" id="PTHR43580:SF2">
    <property type="entry name" value="CYTOKINE-LIKE NUCLEAR FACTOR N-PAC"/>
    <property type="match status" value="1"/>
</dbReference>
<dbReference type="PANTHER" id="PTHR43580">
    <property type="entry name" value="OXIDOREDUCTASE GLYR1-RELATED"/>
    <property type="match status" value="1"/>
</dbReference>
<dbReference type="Pfam" id="PF14833">
    <property type="entry name" value="NAD_binding_11"/>
    <property type="match status" value="1"/>
</dbReference>
<dbReference type="Pfam" id="PF03446">
    <property type="entry name" value="NAD_binding_2"/>
    <property type="match status" value="1"/>
</dbReference>
<dbReference type="Pfam" id="PF00855">
    <property type="entry name" value="PWWP"/>
    <property type="match status" value="1"/>
</dbReference>
<dbReference type="SMART" id="SM00293">
    <property type="entry name" value="PWWP"/>
    <property type="match status" value="1"/>
</dbReference>
<dbReference type="SUPFAM" id="SSF48179">
    <property type="entry name" value="6-phosphogluconate dehydrogenase C-terminal domain-like"/>
    <property type="match status" value="1"/>
</dbReference>
<dbReference type="SUPFAM" id="SSF51735">
    <property type="entry name" value="NAD(P)-binding Rossmann-fold domains"/>
    <property type="match status" value="1"/>
</dbReference>
<dbReference type="SUPFAM" id="SSF63748">
    <property type="entry name" value="Tudor/PWWP/MBT"/>
    <property type="match status" value="1"/>
</dbReference>
<dbReference type="PROSITE" id="PS50812">
    <property type="entry name" value="PWWP"/>
    <property type="match status" value="1"/>
</dbReference>
<keyword id="KW-0158">Chromosome</keyword>
<keyword id="KW-0238">DNA-binding</keyword>
<keyword id="KW-0539">Nucleus</keyword>
<keyword id="KW-1185">Reference proteome</keyword>
<reference key="1">
    <citation type="journal article" date="2005" name="Genome Biol.">
        <title>Full-length cDNAs from chicken bursal lymphocytes to facilitate gene function analysis.</title>
        <authorList>
            <person name="Caldwell R.B."/>
            <person name="Kierzek A.M."/>
            <person name="Arakawa H."/>
            <person name="Bezzubov Y."/>
            <person name="Zaim J."/>
            <person name="Fiedler P."/>
            <person name="Kutter S."/>
            <person name="Blagodatski A."/>
            <person name="Kostovska D."/>
            <person name="Koter M."/>
            <person name="Plachy J."/>
            <person name="Carninci P."/>
            <person name="Hayashizaki Y."/>
            <person name="Buerstedde J.-M."/>
        </authorList>
    </citation>
    <scope>NUCLEOTIDE SEQUENCE [LARGE SCALE MRNA]</scope>
    <source>
        <strain>CB</strain>
        <tissue>Bursa of Fabricius</tissue>
    </source>
</reference>
<sequence>MAAVSLRLGDLVWGKLGRYPPWPGKIVNPPKDLKKPRGKKCFFVKFFGTEDHAWIKVEQLKPYHLHKEEMIKINKGKRFQQAVDAVEEFLRKTKGKDQASSHNSSEEKNRRNSSEERGKQSAREEKRKASLSEGKLKKGTGEGKKRVSSVSSERGSKSPLKRAQDQSPRKRGRPPKDEKDLTIPESSTVKRVMTGTVAGFKWPPSVSEPVKDSDPHFHHFLLSQTEKPAVCYQAITKKLKVCEEETGSTSIQAADSTAVNGSITPTDKKIGFLGLGLMGSGIVSNLLKMGHTVTVWNRTAEKCDLFIQEGARLGRTPAEVVSTCDITFACVSDPKAAKDLVLGPSGVLQGIRPGKCYVDMSTVDADTVTELAQVIVSRGGRFLEAPVSGNQQLSNDGMLVILAAGDRGLYEDCSSCFQAMGKTSFFLGEVGNAAKMMLIVNMVQGSFMATIAEGLTLAQVTGQSQQTLLDILNQGQLASIFLDQKCQNILQGNFKPDFYLKYIQKDLRLAIALGDSVNHPTPMAAAANEVYKRAKALDQSDNDMSAVYRAYIH</sequence>
<comment type="function">
    <text evidence="1">Cytokine-like nuclear factor with chromatin gene reader activity involved in chromatin modification and regulation of gene expression. Acts as a nucleosome-destabilizing factor that is recruited to genes during transcriptional activation. Recognizes and binds histone H3 without a preference for specific epigenetic markers and also binds DNA. Interacts with KDM1B and promotes its histone demethylase activity by facilitating the capture of H3 tails, they form a multifunctional enzyme complex that modifies transcribed chromatin and facilitates Pol II transcription through nucleosomes.</text>
</comment>
<comment type="subunit">
    <text evidence="1">Homotetramere. Binds to mononucleosomes.</text>
</comment>
<comment type="subcellular location">
    <subcellularLocation>
        <location evidence="1">Nucleus</location>
    </subcellularLocation>
    <subcellularLocation>
        <location evidence="1">Chromosome</location>
    </subcellularLocation>
    <text evidence="1">Found in actively RNAPolII-transcribed gene bodies.</text>
</comment>
<comment type="domain">
    <text evidence="1">The A.T hook DNA-binding domain is required for the interaction with MAPK14.</text>
</comment>
<comment type="domain">
    <text evidence="1">The PWWP domain is a H3 reader and strongly binds DNA.</text>
</comment>
<comment type="domain">
    <text evidence="1">In the dehydrogenase domain, the conserved NAD(P)H-binding sites and sequence similarity to plant dehydrogenases suggest that this protein may have oxidoreductase activity. However, since the active site is not conserved, the dehydrogenase domain seems to serve as a catalytically inert oligomerization module.</text>
</comment>
<comment type="similarity">
    <text evidence="4">Belongs to the HIBADH-related family. NP60 subfamily.</text>
</comment>
<feature type="chain" id="PRO_0000312125" description="Cytokine-like nuclear factor N-PAC">
    <location>
        <begin position="1"/>
        <end position="553"/>
    </location>
</feature>
<feature type="domain" description="PWWP" evidence="2">
    <location>
        <begin position="8"/>
        <end position="66"/>
    </location>
</feature>
<feature type="DNA-binding region" description="A.T hook" evidence="4">
    <location>
        <begin position="168"/>
        <end position="180"/>
    </location>
</feature>
<feature type="region of interest" description="Disordered" evidence="3">
    <location>
        <begin position="92"/>
        <end position="188"/>
    </location>
</feature>
<feature type="region of interest" description="Interaction with histone H3" evidence="1">
    <location>
        <begin position="214"/>
        <end position="217"/>
    </location>
</feature>
<feature type="region of interest" description="Dehydrogenase domain" evidence="1">
    <location>
        <begin position="261"/>
        <end position="553"/>
    </location>
</feature>
<feature type="compositionally biased region" description="Basic and acidic residues" evidence="3">
    <location>
        <begin position="92"/>
        <end position="145"/>
    </location>
</feature>
<feature type="compositionally biased region" description="Basic and acidic residues" evidence="3">
    <location>
        <begin position="162"/>
        <end position="182"/>
    </location>
</feature>
<feature type="binding site" evidence="1">
    <location>
        <begin position="271"/>
        <end position="285"/>
    </location>
    <ligand>
        <name>NAD(+)</name>
        <dbReference type="ChEBI" id="CHEBI:57540"/>
    </ligand>
</feature>
<feature type="binding site" evidence="1">
    <location>
        <position position="362"/>
    </location>
    <ligand>
        <name>NAD(+)</name>
        <dbReference type="ChEBI" id="CHEBI:57540"/>
    </ligand>
</feature>
<feature type="binding site" evidence="1">
    <location>
        <position position="505"/>
    </location>
    <ligand>
        <name>NAD(+)</name>
        <dbReference type="ChEBI" id="CHEBI:57540"/>
    </ligand>
</feature>
<accession>Q5ZLS7</accession>
<evidence type="ECO:0000250" key="1">
    <source>
        <dbReference type="UniProtKB" id="Q49A26"/>
    </source>
</evidence>
<evidence type="ECO:0000255" key="2">
    <source>
        <dbReference type="PROSITE-ProRule" id="PRU00162"/>
    </source>
</evidence>
<evidence type="ECO:0000256" key="3">
    <source>
        <dbReference type="SAM" id="MobiDB-lite"/>
    </source>
</evidence>
<evidence type="ECO:0000305" key="4"/>
<organism>
    <name type="scientific">Gallus gallus</name>
    <name type="common">Chicken</name>
    <dbReference type="NCBI Taxonomy" id="9031"/>
    <lineage>
        <taxon>Eukaryota</taxon>
        <taxon>Metazoa</taxon>
        <taxon>Chordata</taxon>
        <taxon>Craniata</taxon>
        <taxon>Vertebrata</taxon>
        <taxon>Euteleostomi</taxon>
        <taxon>Archelosauria</taxon>
        <taxon>Archosauria</taxon>
        <taxon>Dinosauria</taxon>
        <taxon>Saurischia</taxon>
        <taxon>Theropoda</taxon>
        <taxon>Coelurosauria</taxon>
        <taxon>Aves</taxon>
        <taxon>Neognathae</taxon>
        <taxon>Galloanserae</taxon>
        <taxon>Galliformes</taxon>
        <taxon>Phasianidae</taxon>
        <taxon>Phasianinae</taxon>
        <taxon>Gallus</taxon>
    </lineage>
</organism>
<name>GLYR1_CHICK</name>
<protein>
    <recommendedName>
        <fullName>Cytokine-like nuclear factor N-PAC</fullName>
        <shortName>NPAC</shortName>
    </recommendedName>
    <alternativeName>
        <fullName>Glyoxylate reductase 1 homolog</fullName>
    </alternativeName>
    <alternativeName>
        <fullName>Nuclear protein NP60</fullName>
    </alternativeName>
    <alternativeName>
        <fullName>Putative oxidoreductase GLYR1</fullName>
    </alternativeName>
</protein>